<accession>P18606</accession>
<evidence type="ECO:0000250" key="1">
    <source>
        <dbReference type="UniProtKB" id="P20248"/>
    </source>
</evidence>
<evidence type="ECO:0000250" key="2">
    <source>
        <dbReference type="UniProtKB" id="P78396"/>
    </source>
</evidence>
<evidence type="ECO:0000269" key="3">
    <source>
    </source>
</evidence>
<evidence type="ECO:0000305" key="4"/>
<protein>
    <recommendedName>
        <fullName>Cyclin-A1</fullName>
    </recommendedName>
</protein>
<gene>
    <name type="primary">ccna1</name>
</gene>
<proteinExistence type="evidence at transcript level"/>
<sequence>MRRSMASNGHILTASSVVGASSAFQNPCLAKVEVQPNLPQRTVLGVIGDNEQRRRSVSRGGVPAKSLPGIENVLAFPGKILSANPAPVAPKPSFTVYVDEPTETYSVEIDCPSLGDEDSNIVKQNIHLLLDISEASPMVVDTSPQTSPEDDSVTDPDAVAVSEYIHEIHQYLREAELKHRPKAYYMRKQPDITSAMRTILVDWLVEVGEEYKLHTETLYLAMNYLDRFLSCMSVLRGKLQLVGTAAILLASKYEEIYPPDVDEFVYITDDTYSKKQLLRMEHVLLKVLAFDLTVPTVNQFLLQYLQRHAVSVKMEHLAMYMAELTLLEVEPFLKYVPSLTAAAAYCLANYALNKVFWPDTLEAFTGYALSDIAPCLSDLHQFCLGAPYQAQQAIREKYKTTKYMQVSLLEMPSILPLN</sequence>
<organism>
    <name type="scientific">Xenopus laevis</name>
    <name type="common">African clawed frog</name>
    <dbReference type="NCBI Taxonomy" id="8355"/>
    <lineage>
        <taxon>Eukaryota</taxon>
        <taxon>Metazoa</taxon>
        <taxon>Chordata</taxon>
        <taxon>Craniata</taxon>
        <taxon>Vertebrata</taxon>
        <taxon>Euteleostomi</taxon>
        <taxon>Amphibia</taxon>
        <taxon>Batrachia</taxon>
        <taxon>Anura</taxon>
        <taxon>Pipoidea</taxon>
        <taxon>Pipidae</taxon>
        <taxon>Xenopodinae</taxon>
        <taxon>Xenopus</taxon>
        <taxon>Xenopus</taxon>
    </lineage>
</organism>
<comment type="function">
    <text evidence="2">May be involved in the control of the cell cycle at the G1/S (start) and G2/M (mitosis) transitions.</text>
</comment>
<comment type="subunit">
    <text evidence="2">Interacts with the CDK1 and the CDK2 protein kinases to form a serine/threonine kinase holoenzyme complex. The cyclin subunit imparts substrate specificity to the complex (By similarity).</text>
</comment>
<comment type="subcellular location">
    <subcellularLocation>
        <location evidence="1">Nucleus</location>
    </subcellularLocation>
</comment>
<comment type="developmental stage">
    <text evidence="3">Present in eggs and early embryos but cannot be detected in late embryos.</text>
</comment>
<comment type="similarity">
    <text evidence="4">Belongs to the cyclin family. Cyclin AB subfamily.</text>
</comment>
<dbReference type="EMBL" id="X53745">
    <property type="protein sequence ID" value="CAA37775.1"/>
    <property type="molecule type" value="mRNA"/>
</dbReference>
<dbReference type="PIR" id="S11678">
    <property type="entry name" value="S11678"/>
</dbReference>
<dbReference type="SMR" id="P18606"/>
<dbReference type="ELM" id="P18606"/>
<dbReference type="AGR" id="Xenbase:XB-GENE-17338602"/>
<dbReference type="Xenbase" id="XB-GENE-17338602">
    <property type="gene designation" value="ccna1.S"/>
</dbReference>
<dbReference type="Proteomes" id="UP000186698">
    <property type="component" value="Unplaced"/>
</dbReference>
<dbReference type="GO" id="GO:0097124">
    <property type="term" value="C:cyclin A2-CDK2 complex"/>
    <property type="evidence" value="ECO:0000318"/>
    <property type="project" value="GO_Central"/>
</dbReference>
<dbReference type="GO" id="GO:0005737">
    <property type="term" value="C:cytoplasm"/>
    <property type="evidence" value="ECO:0000318"/>
    <property type="project" value="GO_Central"/>
</dbReference>
<dbReference type="GO" id="GO:0005815">
    <property type="term" value="C:microtubule organizing center"/>
    <property type="evidence" value="ECO:0000318"/>
    <property type="project" value="GO_Central"/>
</dbReference>
<dbReference type="GO" id="GO:0005634">
    <property type="term" value="C:nucleus"/>
    <property type="evidence" value="ECO:0000318"/>
    <property type="project" value="GO_Central"/>
</dbReference>
<dbReference type="GO" id="GO:0016538">
    <property type="term" value="F:cyclin-dependent protein serine/threonine kinase regulator activity"/>
    <property type="evidence" value="ECO:0000318"/>
    <property type="project" value="GO_Central"/>
</dbReference>
<dbReference type="GO" id="GO:0051301">
    <property type="term" value="P:cell division"/>
    <property type="evidence" value="ECO:0007669"/>
    <property type="project" value="UniProtKB-KW"/>
</dbReference>
<dbReference type="GO" id="GO:0000082">
    <property type="term" value="P:G1/S transition of mitotic cell cycle"/>
    <property type="evidence" value="ECO:0000318"/>
    <property type="project" value="GO_Central"/>
</dbReference>
<dbReference type="CDD" id="cd20560">
    <property type="entry name" value="CYCLIN_CCNA1_rpt1"/>
    <property type="match status" value="1"/>
</dbReference>
<dbReference type="CDD" id="cd20563">
    <property type="entry name" value="CYCLIN_CCNA1_rpt2"/>
    <property type="match status" value="1"/>
</dbReference>
<dbReference type="FunFam" id="1.10.472.10:FF:000001">
    <property type="entry name" value="G2/mitotic-specific cyclin"/>
    <property type="match status" value="1"/>
</dbReference>
<dbReference type="Gene3D" id="1.10.472.10">
    <property type="entry name" value="Cyclin-like"/>
    <property type="match status" value="2"/>
</dbReference>
<dbReference type="InterPro" id="IPR039361">
    <property type="entry name" value="Cyclin"/>
</dbReference>
<dbReference type="InterPro" id="IPR032447">
    <property type="entry name" value="Cyclin-A_N"/>
</dbReference>
<dbReference type="InterPro" id="IPR013763">
    <property type="entry name" value="Cyclin-like_dom"/>
</dbReference>
<dbReference type="InterPro" id="IPR036915">
    <property type="entry name" value="Cyclin-like_sf"/>
</dbReference>
<dbReference type="InterPro" id="IPR004367">
    <property type="entry name" value="Cyclin_C-dom"/>
</dbReference>
<dbReference type="InterPro" id="IPR006671">
    <property type="entry name" value="Cyclin_N"/>
</dbReference>
<dbReference type="InterPro" id="IPR048258">
    <property type="entry name" value="Cyclins_cyclin-box"/>
</dbReference>
<dbReference type="PANTHER" id="PTHR10177">
    <property type="entry name" value="CYCLINS"/>
    <property type="match status" value="1"/>
</dbReference>
<dbReference type="Pfam" id="PF02984">
    <property type="entry name" value="Cyclin_C"/>
    <property type="match status" value="1"/>
</dbReference>
<dbReference type="Pfam" id="PF00134">
    <property type="entry name" value="Cyclin_N"/>
    <property type="match status" value="1"/>
</dbReference>
<dbReference type="Pfam" id="PF16500">
    <property type="entry name" value="Cyclin_N2"/>
    <property type="match status" value="1"/>
</dbReference>
<dbReference type="SMART" id="SM00385">
    <property type="entry name" value="CYCLIN"/>
    <property type="match status" value="2"/>
</dbReference>
<dbReference type="SMART" id="SM01332">
    <property type="entry name" value="Cyclin_C"/>
    <property type="match status" value="1"/>
</dbReference>
<dbReference type="SUPFAM" id="SSF47954">
    <property type="entry name" value="Cyclin-like"/>
    <property type="match status" value="2"/>
</dbReference>
<dbReference type="PROSITE" id="PS00292">
    <property type="entry name" value="CYCLINS"/>
    <property type="match status" value="1"/>
</dbReference>
<reference key="1">
    <citation type="journal article" date="1990" name="EMBO J.">
        <title>The A- and B-type cyclin associated cdc2 kinases in Xenopus turn on and off at different times in the cell cycle.</title>
        <authorList>
            <person name="Minshull J."/>
            <person name="Golsteyn R."/>
            <person name="Hill C.S."/>
            <person name="Hunt T."/>
        </authorList>
    </citation>
    <scope>NUCLEOTIDE SEQUENCE [MRNA]</scope>
    <source>
        <tissue>Ovary</tissue>
    </source>
</reference>
<keyword id="KW-0131">Cell cycle</keyword>
<keyword id="KW-0132">Cell division</keyword>
<keyword id="KW-0195">Cyclin</keyword>
<keyword id="KW-0498">Mitosis</keyword>
<keyword id="KW-0539">Nucleus</keyword>
<keyword id="KW-1185">Reference proteome</keyword>
<name>CCNA1_XENLA</name>
<feature type="chain" id="PRO_0000080335" description="Cyclin-A1">
    <location>
        <begin position="1"/>
        <end position="418"/>
    </location>
</feature>